<protein>
    <recommendedName>
        <fullName evidence="1">Nucleoid occlusion factor SlmA</fullName>
    </recommendedName>
</protein>
<dbReference type="EMBL" id="CP000444">
    <property type="protein sequence ID" value="ABI41359.1"/>
    <property type="molecule type" value="Genomic_DNA"/>
</dbReference>
<dbReference type="SMR" id="Q0HZU6"/>
<dbReference type="KEGG" id="shm:Shewmr7_0356"/>
<dbReference type="HOGENOM" id="CLU_069356_5_0_6"/>
<dbReference type="GO" id="GO:0043590">
    <property type="term" value="C:bacterial nucleoid"/>
    <property type="evidence" value="ECO:0007669"/>
    <property type="project" value="UniProtKB-UniRule"/>
</dbReference>
<dbReference type="GO" id="GO:0005737">
    <property type="term" value="C:cytoplasm"/>
    <property type="evidence" value="ECO:0007669"/>
    <property type="project" value="UniProtKB-UniRule"/>
</dbReference>
<dbReference type="GO" id="GO:0043565">
    <property type="term" value="F:sequence-specific DNA binding"/>
    <property type="evidence" value="ECO:0007669"/>
    <property type="project" value="UniProtKB-UniRule"/>
</dbReference>
<dbReference type="GO" id="GO:0051301">
    <property type="term" value="P:cell division"/>
    <property type="evidence" value="ECO:0007669"/>
    <property type="project" value="UniProtKB-KW"/>
</dbReference>
<dbReference type="GO" id="GO:0010974">
    <property type="term" value="P:negative regulation of division septum assembly"/>
    <property type="evidence" value="ECO:0007669"/>
    <property type="project" value="InterPro"/>
</dbReference>
<dbReference type="Gene3D" id="1.10.357.10">
    <property type="entry name" value="Tetracycline Repressor, domain 2"/>
    <property type="match status" value="1"/>
</dbReference>
<dbReference type="HAMAP" id="MF_01839">
    <property type="entry name" value="NO_factor_SlmA"/>
    <property type="match status" value="1"/>
</dbReference>
<dbReference type="InterPro" id="IPR009057">
    <property type="entry name" value="Homeodomain-like_sf"/>
</dbReference>
<dbReference type="InterPro" id="IPR050624">
    <property type="entry name" value="HTH-type_Tx_Regulator"/>
</dbReference>
<dbReference type="InterPro" id="IPR001647">
    <property type="entry name" value="HTH_TetR"/>
</dbReference>
<dbReference type="InterPro" id="IPR023769">
    <property type="entry name" value="NO_SlmA"/>
</dbReference>
<dbReference type="InterPro" id="IPR054580">
    <property type="entry name" value="SlmA-like_C"/>
</dbReference>
<dbReference type="NCBIfam" id="NF007015">
    <property type="entry name" value="PRK09480.1"/>
    <property type="match status" value="1"/>
</dbReference>
<dbReference type="PANTHER" id="PTHR43479">
    <property type="entry name" value="ACREF/ENVCD OPERON REPRESSOR-RELATED"/>
    <property type="match status" value="1"/>
</dbReference>
<dbReference type="PANTHER" id="PTHR43479:SF11">
    <property type="entry name" value="ACREF_ENVCD OPERON REPRESSOR-RELATED"/>
    <property type="match status" value="1"/>
</dbReference>
<dbReference type="Pfam" id="PF22276">
    <property type="entry name" value="SlmA-like_C"/>
    <property type="match status" value="1"/>
</dbReference>
<dbReference type="Pfam" id="PF00440">
    <property type="entry name" value="TetR_N"/>
    <property type="match status" value="1"/>
</dbReference>
<dbReference type="SUPFAM" id="SSF46689">
    <property type="entry name" value="Homeodomain-like"/>
    <property type="match status" value="1"/>
</dbReference>
<dbReference type="PROSITE" id="PS50977">
    <property type="entry name" value="HTH_TETR_2"/>
    <property type="match status" value="1"/>
</dbReference>
<organism>
    <name type="scientific">Shewanella sp. (strain MR-7)</name>
    <dbReference type="NCBI Taxonomy" id="60481"/>
    <lineage>
        <taxon>Bacteria</taxon>
        <taxon>Pseudomonadati</taxon>
        <taxon>Pseudomonadota</taxon>
        <taxon>Gammaproteobacteria</taxon>
        <taxon>Alteromonadales</taxon>
        <taxon>Shewanellaceae</taxon>
        <taxon>Shewanella</taxon>
    </lineage>
</organism>
<comment type="function">
    <text evidence="1">Required for nucleoid occlusion (NO) phenomenon, which prevents Z-ring formation and cell division over the nucleoid. Acts as a DNA-associated cell division inhibitor that binds simultaneously chromosomal DNA and FtsZ, and disrupts the assembly of FtsZ polymers. SlmA-DNA-binding sequences (SBS) are dispersed on non-Ter regions of the chromosome, preventing FtsZ polymerization at these regions.</text>
</comment>
<comment type="subunit">
    <text evidence="1">Homodimer. Interacts with FtsZ.</text>
</comment>
<comment type="subcellular location">
    <subcellularLocation>
        <location evidence="1">Cytoplasm</location>
        <location evidence="1">Nucleoid</location>
    </subcellularLocation>
</comment>
<comment type="similarity">
    <text evidence="1">Belongs to the nucleoid occlusion factor SlmA family.</text>
</comment>
<keyword id="KW-0131">Cell cycle</keyword>
<keyword id="KW-0132">Cell division</keyword>
<keyword id="KW-0963">Cytoplasm</keyword>
<keyword id="KW-0238">DNA-binding</keyword>
<proteinExistence type="inferred from homology"/>
<name>SLMA_SHESR</name>
<reference key="1">
    <citation type="submission" date="2006-08" db="EMBL/GenBank/DDBJ databases">
        <title>Complete sequence of chromosome 1 of Shewanella sp. MR-7.</title>
        <authorList>
            <person name="Copeland A."/>
            <person name="Lucas S."/>
            <person name="Lapidus A."/>
            <person name="Barry K."/>
            <person name="Detter J.C."/>
            <person name="Glavina del Rio T."/>
            <person name="Hammon N."/>
            <person name="Israni S."/>
            <person name="Dalin E."/>
            <person name="Tice H."/>
            <person name="Pitluck S."/>
            <person name="Kiss H."/>
            <person name="Brettin T."/>
            <person name="Bruce D."/>
            <person name="Han C."/>
            <person name="Tapia R."/>
            <person name="Gilna P."/>
            <person name="Schmutz J."/>
            <person name="Larimer F."/>
            <person name="Land M."/>
            <person name="Hauser L."/>
            <person name="Kyrpides N."/>
            <person name="Mikhailova N."/>
            <person name="Nealson K."/>
            <person name="Konstantinidis K."/>
            <person name="Klappenbach J."/>
            <person name="Tiedje J."/>
            <person name="Richardson P."/>
        </authorList>
    </citation>
    <scope>NUCLEOTIDE SEQUENCE [LARGE SCALE GENOMIC DNA]</scope>
    <source>
        <strain>MR-7</strain>
    </source>
</reference>
<sequence>MAVSPKINRREHILQCLAQMLETSPGQRITTAKLASEVGVSEAALYRHFPSKARMFEGLIEFIEESLLSRINIIMDDEKDTMRRCQLVLQLLLIFAERNPGISRVLNGDALLGENERLRSRISTLFAKIETQLKQILREKTLREGKGFNLDEAILANLLLAFAEGRIAQFVRSEFKLKPTQHFDEQWRFIQHQLLQS</sequence>
<gene>
    <name evidence="1" type="primary">slmA</name>
    <name type="ordered locus">Shewmr7_0356</name>
</gene>
<feature type="chain" id="PRO_1000070533" description="Nucleoid occlusion factor SlmA">
    <location>
        <begin position="1"/>
        <end position="197"/>
    </location>
</feature>
<feature type="domain" description="HTH tetR-type" evidence="1">
    <location>
        <begin position="7"/>
        <end position="67"/>
    </location>
</feature>
<feature type="DNA-binding region" description="H-T-H motif" evidence="1">
    <location>
        <begin position="30"/>
        <end position="49"/>
    </location>
</feature>
<accession>Q0HZU6</accession>
<evidence type="ECO:0000255" key="1">
    <source>
        <dbReference type="HAMAP-Rule" id="MF_01839"/>
    </source>
</evidence>